<dbReference type="EMBL" id="X17498">
    <property type="protein sequence ID" value="CAA35534.1"/>
    <property type="molecule type" value="Genomic_DNA"/>
</dbReference>
<dbReference type="EMBL" id="U30821">
    <property type="protein sequence ID" value="AAA81233.1"/>
    <property type="molecule type" value="Genomic_DNA"/>
</dbReference>
<dbReference type="PIR" id="S08231">
    <property type="entry name" value="R5KT33"/>
</dbReference>
<dbReference type="RefSeq" id="NP_043202.1">
    <property type="nucleotide sequence ID" value="NC_001675.1"/>
</dbReference>
<dbReference type="GeneID" id="801526"/>
<dbReference type="GO" id="GO:0009842">
    <property type="term" value="C:cyanelle"/>
    <property type="evidence" value="ECO:0007669"/>
    <property type="project" value="UniProtKB-SubCell"/>
</dbReference>
<dbReference type="GO" id="GO:1990904">
    <property type="term" value="C:ribonucleoprotein complex"/>
    <property type="evidence" value="ECO:0007669"/>
    <property type="project" value="UniProtKB-KW"/>
</dbReference>
<dbReference type="GO" id="GO:0005840">
    <property type="term" value="C:ribosome"/>
    <property type="evidence" value="ECO:0007669"/>
    <property type="project" value="UniProtKB-KW"/>
</dbReference>
<dbReference type="GO" id="GO:0003735">
    <property type="term" value="F:structural constituent of ribosome"/>
    <property type="evidence" value="ECO:0007669"/>
    <property type="project" value="InterPro"/>
</dbReference>
<dbReference type="GO" id="GO:0006412">
    <property type="term" value="P:translation"/>
    <property type="evidence" value="ECO:0007669"/>
    <property type="project" value="InterPro"/>
</dbReference>
<dbReference type="Gene3D" id="2.20.28.120">
    <property type="entry name" value="Ribosomal protein L33"/>
    <property type="match status" value="1"/>
</dbReference>
<dbReference type="HAMAP" id="MF_00294">
    <property type="entry name" value="Ribosomal_bL33"/>
    <property type="match status" value="1"/>
</dbReference>
<dbReference type="InterPro" id="IPR001705">
    <property type="entry name" value="Ribosomal_bL33"/>
</dbReference>
<dbReference type="InterPro" id="IPR018264">
    <property type="entry name" value="Ribosomal_bL33_CS"/>
</dbReference>
<dbReference type="InterPro" id="IPR038584">
    <property type="entry name" value="Ribosomal_bL33_sf"/>
</dbReference>
<dbReference type="InterPro" id="IPR011332">
    <property type="entry name" value="Ribosomal_zn-bd"/>
</dbReference>
<dbReference type="NCBIfam" id="NF001764">
    <property type="entry name" value="PRK00504.1"/>
    <property type="match status" value="1"/>
</dbReference>
<dbReference type="NCBIfam" id="NF001860">
    <property type="entry name" value="PRK00595.1"/>
    <property type="match status" value="1"/>
</dbReference>
<dbReference type="NCBIfam" id="TIGR01023">
    <property type="entry name" value="rpmG_bact"/>
    <property type="match status" value="1"/>
</dbReference>
<dbReference type="PANTHER" id="PTHR43168">
    <property type="entry name" value="50S RIBOSOMAL PROTEIN L33, CHLOROPLASTIC"/>
    <property type="match status" value="1"/>
</dbReference>
<dbReference type="PANTHER" id="PTHR43168:SF2">
    <property type="entry name" value="LARGE RIBOSOMAL SUBUNIT PROTEIN BL33C"/>
    <property type="match status" value="1"/>
</dbReference>
<dbReference type="Pfam" id="PF00471">
    <property type="entry name" value="Ribosomal_L33"/>
    <property type="match status" value="1"/>
</dbReference>
<dbReference type="SUPFAM" id="SSF57829">
    <property type="entry name" value="Zn-binding ribosomal proteins"/>
    <property type="match status" value="1"/>
</dbReference>
<dbReference type="PROSITE" id="PS00582">
    <property type="entry name" value="RIBOSOMAL_L33"/>
    <property type="match status" value="1"/>
</dbReference>
<gene>
    <name type="primary">rpl33</name>
</gene>
<comment type="subcellular location">
    <subcellularLocation>
        <location>Plastid</location>
        <location>Cyanelle</location>
    </subcellularLocation>
</comment>
<comment type="similarity">
    <text evidence="1">Belongs to the bacterial ribosomal protein bL33 family.</text>
</comment>
<feature type="chain" id="PRO_0000170271" description="Large ribosomal subunit protein bL33c">
    <location>
        <begin position="1"/>
        <end position="64"/>
    </location>
</feature>
<proteinExistence type="inferred from homology"/>
<reference key="1">
    <citation type="journal article" date="1990" name="J. Mol. Evol.">
        <title>The nucleotide sequence of five ribosomal protein genes from the cyanelles of Cyanophora paradoxa: implications concerning the phylogenetic relationship between cyanelles and chloroplasts.</title>
        <authorList>
            <person name="Evrard J.L."/>
            <person name="Kuntz M."/>
            <person name="Weil J.H."/>
        </authorList>
    </citation>
    <scope>NUCLEOTIDE SEQUENCE [GENOMIC DNA]</scope>
    <source>
        <strain>UTEX LB 555 / Pringsheim</strain>
    </source>
</reference>
<reference key="2">
    <citation type="journal article" date="1995" name="Plant Mol. Biol. Rep.">
        <title>Nucleotide sequence of the cyanelle DNA from Cyanophora paradoxa.</title>
        <authorList>
            <person name="Stirewalt V.L."/>
            <person name="Michalowski C.B."/>
            <person name="Loeffelhardt W."/>
            <person name="Bohnert H.J."/>
            <person name="Bryant D.A."/>
        </authorList>
    </citation>
    <scope>NUCLEOTIDE SEQUENCE [LARGE SCALE GENOMIC DNA]</scope>
    <source>
        <strain>UTEX LB 555 / Pringsheim</strain>
    </source>
</reference>
<reference key="3">
    <citation type="book" date="1997" name="Eukaryotism and symbiosis">
        <title>The complete sequence of the cyanelle genome of Cyanophora paradoxa: the genetic complexity of a primitive plastid.</title>
        <editorList>
            <person name="Schenk H.E.A."/>
            <person name="Herrmann R."/>
            <person name="Jeon K.W."/>
            <person name="Mueller N.E."/>
            <person name="Schwemmler W."/>
        </editorList>
        <authorList>
            <person name="Loeffelhardt W."/>
            <person name="Stirewalt V.L."/>
            <person name="Michalowski C.B."/>
            <person name="Annarella M."/>
            <person name="Farley J.Y."/>
            <person name="Schluchter W.M."/>
            <person name="Chung S."/>
            <person name="Newmann-Spallart C."/>
            <person name="Steiner J.M."/>
            <person name="Jakowitsch J."/>
            <person name="Bohnert H.J."/>
            <person name="Bryant D.A."/>
        </authorList>
    </citation>
    <scope>NUCLEOTIDE SEQUENCE [LARGE SCALE GENOMIC DNA]</scope>
    <source>
        <strain>UTEX LB 555 / Pringsheim</strain>
    </source>
</reference>
<keyword id="KW-0194">Cyanelle</keyword>
<keyword id="KW-0934">Plastid</keyword>
<keyword id="KW-0687">Ribonucleoprotein</keyword>
<keyword id="KW-0689">Ribosomal protein</keyword>
<geneLocation type="cyanelle"/>
<protein>
    <recommendedName>
        <fullName evidence="1">Large ribosomal subunit protein bL33c</fullName>
    </recommendedName>
    <alternativeName>
        <fullName>50S ribosomal protein L33, cyanelle</fullName>
    </alternativeName>
</protein>
<sequence length="64" mass="7402">MARAKGVRILVTLECTECRSNGERLGGGVSRYATKKNRRNTPNRLELNKFCPYCKKHVLHREIK</sequence>
<accession>P15769</accession>
<evidence type="ECO:0000305" key="1"/>
<name>RK33_CYAPA</name>
<organism>
    <name type="scientific">Cyanophora paradoxa</name>
    <dbReference type="NCBI Taxonomy" id="2762"/>
    <lineage>
        <taxon>Eukaryota</taxon>
        <taxon>Glaucocystophyceae</taxon>
        <taxon>Cyanophoraceae</taxon>
        <taxon>Cyanophora</taxon>
    </lineage>
</organism>